<comment type="function">
    <text evidence="1">O-methyltransferase that catalyzes the 2 O-methylation steps in the ubiquinone biosynthetic pathway.</text>
</comment>
<comment type="catalytic activity">
    <reaction evidence="1">
        <text>a 3-demethylubiquinol + S-adenosyl-L-methionine = a ubiquinol + S-adenosyl-L-homocysteine + H(+)</text>
        <dbReference type="Rhea" id="RHEA:44380"/>
        <dbReference type="Rhea" id="RHEA-COMP:9566"/>
        <dbReference type="Rhea" id="RHEA-COMP:10914"/>
        <dbReference type="ChEBI" id="CHEBI:15378"/>
        <dbReference type="ChEBI" id="CHEBI:17976"/>
        <dbReference type="ChEBI" id="CHEBI:57856"/>
        <dbReference type="ChEBI" id="CHEBI:59789"/>
        <dbReference type="ChEBI" id="CHEBI:84422"/>
        <dbReference type="EC" id="2.1.1.64"/>
    </reaction>
</comment>
<comment type="catalytic activity">
    <reaction evidence="1">
        <text>a 3-(all-trans-polyprenyl)benzene-1,2-diol + S-adenosyl-L-methionine = a 2-methoxy-6-(all-trans-polyprenyl)phenol + S-adenosyl-L-homocysteine + H(+)</text>
        <dbReference type="Rhea" id="RHEA:31411"/>
        <dbReference type="Rhea" id="RHEA-COMP:9550"/>
        <dbReference type="Rhea" id="RHEA-COMP:9551"/>
        <dbReference type="ChEBI" id="CHEBI:15378"/>
        <dbReference type="ChEBI" id="CHEBI:57856"/>
        <dbReference type="ChEBI" id="CHEBI:59789"/>
        <dbReference type="ChEBI" id="CHEBI:62729"/>
        <dbReference type="ChEBI" id="CHEBI:62731"/>
        <dbReference type="EC" id="2.1.1.222"/>
    </reaction>
</comment>
<comment type="pathway">
    <text evidence="1">Cofactor biosynthesis; ubiquinone biosynthesis.</text>
</comment>
<comment type="similarity">
    <text evidence="1">Belongs to the methyltransferase superfamily. UbiG/COQ3 family.</text>
</comment>
<proteinExistence type="inferred from homology"/>
<gene>
    <name evidence="1" type="primary">ubiG</name>
    <name type="ordered locus">PLES_18971</name>
</gene>
<name>UBIG_PSEA8</name>
<sequence>MSNVDHAEIAKFEALAHRWWDRESEFKPLHDINPLRVNWIDERAGLAGKKVLDIGCGGGILSEAMAQRGASVTGIDMGEAPLAVARLHQLESGVAVDYRQITAEQMAEEMPGQFDVVTCLEMLEHVPDPASVIRACHRLVKPGGQVFLSTINRNPKAYLFAVIGAEYILQLLPRGTHDFRKFIRPSELGAWSREAGLEVKDIIGLTYNPLTKHYKLANDVDVNYMVQTQREA</sequence>
<dbReference type="EC" id="2.1.1.222" evidence="1"/>
<dbReference type="EC" id="2.1.1.64" evidence="1"/>
<dbReference type="EMBL" id="FM209186">
    <property type="protein sequence ID" value="CAW26625.1"/>
    <property type="molecule type" value="Genomic_DNA"/>
</dbReference>
<dbReference type="RefSeq" id="WP_003122245.1">
    <property type="nucleotide sequence ID" value="NC_011770.1"/>
</dbReference>
<dbReference type="SMR" id="B7V9J5"/>
<dbReference type="KEGG" id="pag:PLES_18971"/>
<dbReference type="HOGENOM" id="CLU_042432_5_0_6"/>
<dbReference type="UniPathway" id="UPA00232"/>
<dbReference type="GO" id="GO:0102208">
    <property type="term" value="F:2-polyprenyl-6-hydroxyphenol methylase activity"/>
    <property type="evidence" value="ECO:0007669"/>
    <property type="project" value="UniProtKB-EC"/>
</dbReference>
<dbReference type="GO" id="GO:0061542">
    <property type="term" value="F:3-demethylubiquinol 3-O-methyltransferase activity"/>
    <property type="evidence" value="ECO:0007669"/>
    <property type="project" value="UniProtKB-UniRule"/>
</dbReference>
<dbReference type="GO" id="GO:0010420">
    <property type="term" value="F:polyprenyldihydroxybenzoate methyltransferase activity"/>
    <property type="evidence" value="ECO:0007669"/>
    <property type="project" value="InterPro"/>
</dbReference>
<dbReference type="GO" id="GO:0032259">
    <property type="term" value="P:methylation"/>
    <property type="evidence" value="ECO:0007669"/>
    <property type="project" value="UniProtKB-KW"/>
</dbReference>
<dbReference type="CDD" id="cd02440">
    <property type="entry name" value="AdoMet_MTases"/>
    <property type="match status" value="1"/>
</dbReference>
<dbReference type="FunFam" id="3.40.50.150:FF:000028">
    <property type="entry name" value="Ubiquinone biosynthesis O-methyltransferase"/>
    <property type="match status" value="1"/>
</dbReference>
<dbReference type="Gene3D" id="3.40.50.150">
    <property type="entry name" value="Vaccinia Virus protein VP39"/>
    <property type="match status" value="1"/>
</dbReference>
<dbReference type="HAMAP" id="MF_00472">
    <property type="entry name" value="UbiG"/>
    <property type="match status" value="1"/>
</dbReference>
<dbReference type="InterPro" id="IPR029063">
    <property type="entry name" value="SAM-dependent_MTases_sf"/>
</dbReference>
<dbReference type="InterPro" id="IPR010233">
    <property type="entry name" value="UbiG_MeTrfase"/>
</dbReference>
<dbReference type="NCBIfam" id="TIGR01983">
    <property type="entry name" value="UbiG"/>
    <property type="match status" value="1"/>
</dbReference>
<dbReference type="PANTHER" id="PTHR43464">
    <property type="entry name" value="METHYLTRANSFERASE"/>
    <property type="match status" value="1"/>
</dbReference>
<dbReference type="PANTHER" id="PTHR43464:SF19">
    <property type="entry name" value="UBIQUINONE BIOSYNTHESIS O-METHYLTRANSFERASE, MITOCHONDRIAL"/>
    <property type="match status" value="1"/>
</dbReference>
<dbReference type="Pfam" id="PF13489">
    <property type="entry name" value="Methyltransf_23"/>
    <property type="match status" value="1"/>
</dbReference>
<dbReference type="SUPFAM" id="SSF53335">
    <property type="entry name" value="S-adenosyl-L-methionine-dependent methyltransferases"/>
    <property type="match status" value="1"/>
</dbReference>
<protein>
    <recommendedName>
        <fullName evidence="1">Ubiquinone biosynthesis O-methyltransferase</fullName>
    </recommendedName>
    <alternativeName>
        <fullName evidence="1">2-polyprenyl-6-hydroxyphenol methylase</fullName>
        <ecNumber evidence="1">2.1.1.222</ecNumber>
    </alternativeName>
    <alternativeName>
        <fullName evidence="1">3-demethylubiquinone 3-O-methyltransferase</fullName>
        <ecNumber evidence="1">2.1.1.64</ecNumber>
    </alternativeName>
</protein>
<evidence type="ECO:0000255" key="1">
    <source>
        <dbReference type="HAMAP-Rule" id="MF_00472"/>
    </source>
</evidence>
<reference key="1">
    <citation type="journal article" date="2009" name="Genome Res.">
        <title>Newly introduced genomic prophage islands are critical determinants of in vivo competitiveness in the Liverpool epidemic strain of Pseudomonas aeruginosa.</title>
        <authorList>
            <person name="Winstanley C."/>
            <person name="Langille M.G.I."/>
            <person name="Fothergill J.L."/>
            <person name="Kukavica-Ibrulj I."/>
            <person name="Paradis-Bleau C."/>
            <person name="Sanschagrin F."/>
            <person name="Thomson N.R."/>
            <person name="Winsor G.L."/>
            <person name="Quail M.A."/>
            <person name="Lennard N."/>
            <person name="Bignell A."/>
            <person name="Clarke L."/>
            <person name="Seeger K."/>
            <person name="Saunders D."/>
            <person name="Harris D."/>
            <person name="Parkhill J."/>
            <person name="Hancock R.E.W."/>
            <person name="Brinkman F.S.L."/>
            <person name="Levesque R.C."/>
        </authorList>
    </citation>
    <scope>NUCLEOTIDE SEQUENCE [LARGE SCALE GENOMIC DNA]</scope>
    <source>
        <strain>LESB58</strain>
    </source>
</reference>
<accession>B7V9J5</accession>
<organism>
    <name type="scientific">Pseudomonas aeruginosa (strain LESB58)</name>
    <dbReference type="NCBI Taxonomy" id="557722"/>
    <lineage>
        <taxon>Bacteria</taxon>
        <taxon>Pseudomonadati</taxon>
        <taxon>Pseudomonadota</taxon>
        <taxon>Gammaproteobacteria</taxon>
        <taxon>Pseudomonadales</taxon>
        <taxon>Pseudomonadaceae</taxon>
        <taxon>Pseudomonas</taxon>
    </lineage>
</organism>
<feature type="chain" id="PRO_1000199690" description="Ubiquinone biosynthesis O-methyltransferase">
    <location>
        <begin position="1"/>
        <end position="232"/>
    </location>
</feature>
<feature type="binding site" evidence="1">
    <location>
        <position position="36"/>
    </location>
    <ligand>
        <name>S-adenosyl-L-methionine</name>
        <dbReference type="ChEBI" id="CHEBI:59789"/>
    </ligand>
</feature>
<feature type="binding site" evidence="1">
    <location>
        <position position="55"/>
    </location>
    <ligand>
        <name>S-adenosyl-L-methionine</name>
        <dbReference type="ChEBI" id="CHEBI:59789"/>
    </ligand>
</feature>
<feature type="binding site" evidence="1">
    <location>
        <position position="76"/>
    </location>
    <ligand>
        <name>S-adenosyl-L-methionine</name>
        <dbReference type="ChEBI" id="CHEBI:59789"/>
    </ligand>
</feature>
<feature type="binding site" evidence="1">
    <location>
        <position position="120"/>
    </location>
    <ligand>
        <name>S-adenosyl-L-methionine</name>
        <dbReference type="ChEBI" id="CHEBI:59789"/>
    </ligand>
</feature>
<keyword id="KW-0489">Methyltransferase</keyword>
<keyword id="KW-0949">S-adenosyl-L-methionine</keyword>
<keyword id="KW-0808">Transferase</keyword>
<keyword id="KW-0831">Ubiquinone biosynthesis</keyword>